<evidence type="ECO:0000255" key="1">
    <source>
        <dbReference type="HAMAP-Rule" id="MF_00446"/>
    </source>
</evidence>
<organism>
    <name type="scientific">Shigella flexneri serotype 5b (strain 8401)</name>
    <dbReference type="NCBI Taxonomy" id="373384"/>
    <lineage>
        <taxon>Bacteria</taxon>
        <taxon>Pseudomonadati</taxon>
        <taxon>Pseudomonadota</taxon>
        <taxon>Gammaproteobacteria</taxon>
        <taxon>Enterobacterales</taxon>
        <taxon>Enterobacteriaceae</taxon>
        <taxon>Shigella</taxon>
    </lineage>
</organism>
<proteinExistence type="inferred from homology"/>
<feature type="chain" id="PRO_0000307069" description="Aspartate 1-decarboxylase beta chain" evidence="1">
    <location>
        <begin position="1"/>
        <end position="24"/>
    </location>
</feature>
<feature type="chain" id="PRO_0000307070" description="Aspartate 1-decarboxylase alpha chain" evidence="1">
    <location>
        <begin position="25"/>
        <end position="126"/>
    </location>
</feature>
<feature type="active site" description="Schiff-base intermediate with substrate; via pyruvic acid" evidence="1">
    <location>
        <position position="25"/>
    </location>
</feature>
<feature type="active site" description="Proton donor" evidence="1">
    <location>
        <position position="58"/>
    </location>
</feature>
<feature type="binding site" evidence="1">
    <location>
        <position position="57"/>
    </location>
    <ligand>
        <name>substrate</name>
    </ligand>
</feature>
<feature type="binding site" evidence="1">
    <location>
        <begin position="73"/>
        <end position="75"/>
    </location>
    <ligand>
        <name>substrate</name>
    </ligand>
</feature>
<feature type="modified residue" description="Pyruvic acid (Ser)" evidence="1">
    <location>
        <position position="25"/>
    </location>
</feature>
<sequence>MIRTMLQGKLHRVKVTHADLHYEGSCAIDQDFLDAAGILENEAIDIWNVTNGKRFSTYAIAAERGSRIISVNGAAAHCASVGDIVIIASFVTMPDEEARTWRPNVAYFEGDNEMKRTAKAIPVQVA</sequence>
<gene>
    <name evidence="1" type="primary">panD</name>
    <name type="ordered locus">SFV_0121</name>
</gene>
<dbReference type="EC" id="4.1.1.11" evidence="1"/>
<dbReference type="EMBL" id="CP000266">
    <property type="protein sequence ID" value="ABF02406.1"/>
    <property type="molecule type" value="Genomic_DNA"/>
</dbReference>
<dbReference type="RefSeq" id="WP_000621515.1">
    <property type="nucleotide sequence ID" value="NC_008258.1"/>
</dbReference>
<dbReference type="SMR" id="Q0T870"/>
<dbReference type="GeneID" id="93777305"/>
<dbReference type="KEGG" id="sfv:SFV_0121"/>
<dbReference type="HOGENOM" id="CLU_115305_2_1_6"/>
<dbReference type="UniPathway" id="UPA00028">
    <property type="reaction ID" value="UER00002"/>
</dbReference>
<dbReference type="Proteomes" id="UP000000659">
    <property type="component" value="Chromosome"/>
</dbReference>
<dbReference type="GO" id="GO:0005829">
    <property type="term" value="C:cytosol"/>
    <property type="evidence" value="ECO:0007669"/>
    <property type="project" value="TreeGrafter"/>
</dbReference>
<dbReference type="GO" id="GO:0004068">
    <property type="term" value="F:aspartate 1-decarboxylase activity"/>
    <property type="evidence" value="ECO:0007669"/>
    <property type="project" value="UniProtKB-UniRule"/>
</dbReference>
<dbReference type="GO" id="GO:0006523">
    <property type="term" value="P:alanine biosynthetic process"/>
    <property type="evidence" value="ECO:0007669"/>
    <property type="project" value="InterPro"/>
</dbReference>
<dbReference type="GO" id="GO:0015940">
    <property type="term" value="P:pantothenate biosynthetic process"/>
    <property type="evidence" value="ECO:0007669"/>
    <property type="project" value="UniProtKB-UniRule"/>
</dbReference>
<dbReference type="CDD" id="cd06919">
    <property type="entry name" value="Asp_decarbox"/>
    <property type="match status" value="1"/>
</dbReference>
<dbReference type="FunFam" id="2.40.40.20:FF:000004">
    <property type="entry name" value="Aspartate 1-decarboxylase"/>
    <property type="match status" value="1"/>
</dbReference>
<dbReference type="Gene3D" id="2.40.40.20">
    <property type="match status" value="1"/>
</dbReference>
<dbReference type="HAMAP" id="MF_00446">
    <property type="entry name" value="PanD"/>
    <property type="match status" value="1"/>
</dbReference>
<dbReference type="InterPro" id="IPR009010">
    <property type="entry name" value="Asp_de-COase-like_dom_sf"/>
</dbReference>
<dbReference type="InterPro" id="IPR003190">
    <property type="entry name" value="Asp_decarbox"/>
</dbReference>
<dbReference type="NCBIfam" id="TIGR00223">
    <property type="entry name" value="panD"/>
    <property type="match status" value="1"/>
</dbReference>
<dbReference type="PANTHER" id="PTHR21012">
    <property type="entry name" value="ASPARTATE 1-DECARBOXYLASE"/>
    <property type="match status" value="1"/>
</dbReference>
<dbReference type="PANTHER" id="PTHR21012:SF0">
    <property type="entry name" value="ASPARTATE 1-DECARBOXYLASE"/>
    <property type="match status" value="1"/>
</dbReference>
<dbReference type="Pfam" id="PF02261">
    <property type="entry name" value="Asp_decarbox"/>
    <property type="match status" value="1"/>
</dbReference>
<dbReference type="PIRSF" id="PIRSF006246">
    <property type="entry name" value="Asp_decarbox"/>
    <property type="match status" value="1"/>
</dbReference>
<dbReference type="SUPFAM" id="SSF50692">
    <property type="entry name" value="ADC-like"/>
    <property type="match status" value="1"/>
</dbReference>
<accession>Q0T870</accession>
<protein>
    <recommendedName>
        <fullName evidence="1">Aspartate 1-decarboxylase</fullName>
        <ecNumber evidence="1">4.1.1.11</ecNumber>
    </recommendedName>
    <alternativeName>
        <fullName evidence="1">Aspartate alpha-decarboxylase</fullName>
    </alternativeName>
    <component>
        <recommendedName>
            <fullName evidence="1">Aspartate 1-decarboxylase beta chain</fullName>
        </recommendedName>
    </component>
    <component>
        <recommendedName>
            <fullName evidence="1">Aspartate 1-decarboxylase alpha chain</fullName>
        </recommendedName>
    </component>
</protein>
<reference key="1">
    <citation type="journal article" date="2006" name="BMC Genomics">
        <title>Complete genome sequence of Shigella flexneri 5b and comparison with Shigella flexneri 2a.</title>
        <authorList>
            <person name="Nie H."/>
            <person name="Yang F."/>
            <person name="Zhang X."/>
            <person name="Yang J."/>
            <person name="Chen L."/>
            <person name="Wang J."/>
            <person name="Xiong Z."/>
            <person name="Peng J."/>
            <person name="Sun L."/>
            <person name="Dong J."/>
            <person name="Xue Y."/>
            <person name="Xu X."/>
            <person name="Chen S."/>
            <person name="Yao Z."/>
            <person name="Shen Y."/>
            <person name="Jin Q."/>
        </authorList>
    </citation>
    <scope>NUCLEOTIDE SEQUENCE [LARGE SCALE GENOMIC DNA]</scope>
    <source>
        <strain>8401</strain>
    </source>
</reference>
<keyword id="KW-0068">Autocatalytic cleavage</keyword>
<keyword id="KW-0963">Cytoplasm</keyword>
<keyword id="KW-0210">Decarboxylase</keyword>
<keyword id="KW-0456">Lyase</keyword>
<keyword id="KW-0566">Pantothenate biosynthesis</keyword>
<keyword id="KW-0670">Pyruvate</keyword>
<keyword id="KW-0704">Schiff base</keyword>
<keyword id="KW-0865">Zymogen</keyword>
<comment type="function">
    <text evidence="1">Catalyzes the pyruvoyl-dependent decarboxylation of aspartate to produce beta-alanine.</text>
</comment>
<comment type="catalytic activity">
    <reaction evidence="1">
        <text>L-aspartate + H(+) = beta-alanine + CO2</text>
        <dbReference type="Rhea" id="RHEA:19497"/>
        <dbReference type="ChEBI" id="CHEBI:15378"/>
        <dbReference type="ChEBI" id="CHEBI:16526"/>
        <dbReference type="ChEBI" id="CHEBI:29991"/>
        <dbReference type="ChEBI" id="CHEBI:57966"/>
        <dbReference type="EC" id="4.1.1.11"/>
    </reaction>
</comment>
<comment type="cofactor">
    <cofactor evidence="1">
        <name>pyruvate</name>
        <dbReference type="ChEBI" id="CHEBI:15361"/>
    </cofactor>
    <text evidence="1">Binds 1 pyruvoyl group covalently per subunit.</text>
</comment>
<comment type="pathway">
    <text evidence="1">Cofactor biosynthesis; (R)-pantothenate biosynthesis; beta-alanine from L-aspartate: step 1/1.</text>
</comment>
<comment type="subunit">
    <text evidence="1">Heterooctamer of four alpha and four beta subunits.</text>
</comment>
<comment type="subcellular location">
    <subcellularLocation>
        <location evidence="1">Cytoplasm</location>
    </subcellularLocation>
</comment>
<comment type="PTM">
    <text evidence="1">Is synthesized initially as an inactive proenzyme, which is activated by self-cleavage at a specific serine bond to produce a beta-subunit with a hydroxyl group at its C-terminus and an alpha-subunit with a pyruvoyl group at its N-terminus.</text>
</comment>
<comment type="similarity">
    <text evidence="1">Belongs to the PanD family.</text>
</comment>
<name>PAND_SHIF8</name>